<organism>
    <name type="scientific">Neurospora crassa (strain ATCC 24698 / 74-OR23-1A / CBS 708.71 / DSM 1257 / FGSC 987)</name>
    <dbReference type="NCBI Taxonomy" id="367110"/>
    <lineage>
        <taxon>Eukaryota</taxon>
        <taxon>Fungi</taxon>
        <taxon>Dikarya</taxon>
        <taxon>Ascomycota</taxon>
        <taxon>Pezizomycotina</taxon>
        <taxon>Sordariomycetes</taxon>
        <taxon>Sordariomycetidae</taxon>
        <taxon>Sordariales</taxon>
        <taxon>Sordariaceae</taxon>
        <taxon>Neurospora</taxon>
    </lineage>
</organism>
<sequence length="261" mass="29398">MPQNEYIERAQKLHGKRLDTEERARKKAAREGHKQSENAQNLRGLRAKLFAKERHAQKIQMRKAIKQHEERNVKGAPEEKDPSNPVPAYLLDRSNPTSAKALSSQIKSKRAEKAARFSVPIPKVKGISEEELFKVVKTGKKVHKKGWKRVVTKPTFVGPDFTRRPVKYERFIRPMGLRYKKANVTHPTLNVTVQLPILGVKKNPSNPLYTQLGVLSKGTIIEVNVSDLGMVTASGKIAWGRYAQITNNPENDGCLNAVLLV</sequence>
<protein>
    <recommendedName>
        <fullName>Ribosome biogenesis protein nsa2</fullName>
    </recommendedName>
</protein>
<gene>
    <name type="primary">rbg-52</name>
    <name type="synonym">nsa2</name>
    <name type="ORF">B20J13.320</name>
    <name type="ORF">NCU00981</name>
</gene>
<proteinExistence type="inferred from homology"/>
<name>NSA2_NEUCR</name>
<keyword id="KW-0539">Nucleus</keyword>
<keyword id="KW-1185">Reference proteome</keyword>
<keyword id="KW-0687">Ribonucleoprotein</keyword>
<keyword id="KW-0690">Ribosome biogenesis</keyword>
<keyword id="KW-0698">rRNA processing</keyword>
<evidence type="ECO:0000250" key="1"/>
<evidence type="ECO:0000250" key="2">
    <source>
        <dbReference type="UniProtKB" id="P40078"/>
    </source>
</evidence>
<evidence type="ECO:0000255" key="3">
    <source>
        <dbReference type="PROSITE-ProRule" id="PRU00768"/>
    </source>
</evidence>
<evidence type="ECO:0000256" key="4">
    <source>
        <dbReference type="SAM" id="MobiDB-lite"/>
    </source>
</evidence>
<evidence type="ECO:0000305" key="5"/>
<accession>Q7SGE1</accession>
<feature type="chain" id="PRO_0000320421" description="Ribosome biogenesis protein nsa2">
    <location>
        <begin position="1"/>
        <end position="261"/>
    </location>
</feature>
<feature type="region of interest" description="Disordered" evidence="4">
    <location>
        <begin position="1"/>
        <end position="44"/>
    </location>
</feature>
<feature type="region of interest" description="Disordered" evidence="4">
    <location>
        <begin position="64"/>
        <end position="97"/>
    </location>
</feature>
<feature type="short sequence motif" description="Nuclear localization signal" evidence="3">
    <location>
        <begin position="15"/>
        <end position="22"/>
    </location>
</feature>
<feature type="compositionally biased region" description="Basic and acidic residues" evidence="4">
    <location>
        <begin position="1"/>
        <end position="36"/>
    </location>
</feature>
<feature type="compositionally biased region" description="Basic and acidic residues" evidence="4">
    <location>
        <begin position="66"/>
        <end position="82"/>
    </location>
</feature>
<comment type="function">
    <text evidence="1">Involved in the biogenesis of the 60S ribosomal subunit. May play a part in the quality control of pre-60S particles (By similarity).</text>
</comment>
<comment type="subunit">
    <text evidence="2">Component of the pre-66S ribosomal particle. Interacts with nop7 and rrp1. Interacts with rsa4 (via WD repeats).</text>
</comment>
<comment type="subcellular location">
    <subcellularLocation>
        <location evidence="1">Nucleus</location>
        <location evidence="1">Nucleolus</location>
    </subcellularLocation>
</comment>
<comment type="similarity">
    <text evidence="5">Belongs to the eukaryotic ribosomal protein eS8 family. Ribosome biogenesis protein NSA2 subfamily.</text>
</comment>
<dbReference type="EMBL" id="BX842629">
    <property type="protein sequence ID" value="CAE76351.1"/>
    <property type="molecule type" value="Genomic_DNA"/>
</dbReference>
<dbReference type="EMBL" id="CM002236">
    <property type="protein sequence ID" value="EAA35938.1"/>
    <property type="molecule type" value="Genomic_DNA"/>
</dbReference>
<dbReference type="RefSeq" id="XP_965174.1">
    <property type="nucleotide sequence ID" value="XM_960081.2"/>
</dbReference>
<dbReference type="SMR" id="Q7SGE1"/>
<dbReference type="FunCoup" id="Q7SGE1">
    <property type="interactions" value="1142"/>
</dbReference>
<dbReference type="STRING" id="367110.Q7SGE1"/>
<dbReference type="PaxDb" id="5141-EFNCRP00000000853"/>
<dbReference type="EnsemblFungi" id="EAA35938">
    <property type="protein sequence ID" value="EAA35938"/>
    <property type="gene ID" value="NCU00981"/>
</dbReference>
<dbReference type="GeneID" id="3881310"/>
<dbReference type="KEGG" id="ncr:NCU00981"/>
<dbReference type="VEuPathDB" id="FungiDB:NCU00981"/>
<dbReference type="HOGENOM" id="CLU_1070048_0_0_1"/>
<dbReference type="InParanoid" id="Q7SGE1"/>
<dbReference type="OrthoDB" id="1847590at2759"/>
<dbReference type="Proteomes" id="UP000001805">
    <property type="component" value="Chromosome 1, Linkage Group I"/>
</dbReference>
<dbReference type="GO" id="GO:0005730">
    <property type="term" value="C:nucleolus"/>
    <property type="evidence" value="ECO:0007669"/>
    <property type="project" value="UniProtKB-SubCell"/>
</dbReference>
<dbReference type="GO" id="GO:0030687">
    <property type="term" value="C:preribosome, large subunit precursor"/>
    <property type="evidence" value="ECO:0000318"/>
    <property type="project" value="GO_Central"/>
</dbReference>
<dbReference type="GO" id="GO:0000460">
    <property type="term" value="P:maturation of 5.8S rRNA"/>
    <property type="evidence" value="ECO:0000318"/>
    <property type="project" value="GO_Central"/>
</dbReference>
<dbReference type="GO" id="GO:0000466">
    <property type="term" value="P:maturation of 5.8S rRNA from tricistronic rRNA transcript (SSU-rRNA, 5.8S rRNA, LSU-rRNA)"/>
    <property type="evidence" value="ECO:0007669"/>
    <property type="project" value="EnsemblFungi"/>
</dbReference>
<dbReference type="GO" id="GO:0000470">
    <property type="term" value="P:maturation of LSU-rRNA"/>
    <property type="evidence" value="ECO:0000318"/>
    <property type="project" value="GO_Central"/>
</dbReference>
<dbReference type="GO" id="GO:0000463">
    <property type="term" value="P:maturation of LSU-rRNA from tricistronic rRNA transcript (SSU-rRNA, 5.8S rRNA, LSU-rRNA)"/>
    <property type="evidence" value="ECO:0007669"/>
    <property type="project" value="EnsemblFungi"/>
</dbReference>
<dbReference type="CDD" id="cd11381">
    <property type="entry name" value="NSA2"/>
    <property type="match status" value="1"/>
</dbReference>
<dbReference type="FunFam" id="2.40.10.310:FF:000001">
    <property type="entry name" value="NSA2, ribosome biogenesis homolog"/>
    <property type="match status" value="1"/>
</dbReference>
<dbReference type="Gene3D" id="2.40.10.310">
    <property type="match status" value="1"/>
</dbReference>
<dbReference type="InterPro" id="IPR039411">
    <property type="entry name" value="NSA2_fam"/>
</dbReference>
<dbReference type="InterPro" id="IPR022309">
    <property type="entry name" value="Ribosomal_Se8/biogenesis_NSA2"/>
</dbReference>
<dbReference type="PANTHER" id="PTHR12642">
    <property type="entry name" value="RIBOSOME BIOGENESIS PROTEIN NSA2 HOMOLOG"/>
    <property type="match status" value="1"/>
</dbReference>
<dbReference type="Pfam" id="PF01201">
    <property type="entry name" value="Ribosomal_S8e"/>
    <property type="match status" value="1"/>
</dbReference>
<reference key="1">
    <citation type="journal article" date="2003" name="Nucleic Acids Res.">
        <title>What's in the genome of a filamentous fungus? Analysis of the Neurospora genome sequence.</title>
        <authorList>
            <person name="Mannhaupt G."/>
            <person name="Montrone C."/>
            <person name="Haase D."/>
            <person name="Mewes H.-W."/>
            <person name="Aign V."/>
            <person name="Hoheisel J.D."/>
            <person name="Fartmann B."/>
            <person name="Nyakatura G."/>
            <person name="Kempken F."/>
            <person name="Maier J."/>
            <person name="Schulte U."/>
        </authorList>
    </citation>
    <scope>NUCLEOTIDE SEQUENCE [LARGE SCALE GENOMIC DNA]</scope>
    <source>
        <strain>ATCC 24698 / 74-OR23-1A / CBS 708.71 / DSM 1257 / FGSC 987</strain>
    </source>
</reference>
<reference key="2">
    <citation type="journal article" date="2003" name="Nature">
        <title>The genome sequence of the filamentous fungus Neurospora crassa.</title>
        <authorList>
            <person name="Galagan J.E."/>
            <person name="Calvo S.E."/>
            <person name="Borkovich K.A."/>
            <person name="Selker E.U."/>
            <person name="Read N.D."/>
            <person name="Jaffe D.B."/>
            <person name="FitzHugh W."/>
            <person name="Ma L.-J."/>
            <person name="Smirnov S."/>
            <person name="Purcell S."/>
            <person name="Rehman B."/>
            <person name="Elkins T."/>
            <person name="Engels R."/>
            <person name="Wang S."/>
            <person name="Nielsen C.B."/>
            <person name="Butler J."/>
            <person name="Endrizzi M."/>
            <person name="Qui D."/>
            <person name="Ianakiev P."/>
            <person name="Bell-Pedersen D."/>
            <person name="Nelson M.A."/>
            <person name="Werner-Washburne M."/>
            <person name="Selitrennikoff C.P."/>
            <person name="Kinsey J.A."/>
            <person name="Braun E.L."/>
            <person name="Zelter A."/>
            <person name="Schulte U."/>
            <person name="Kothe G.O."/>
            <person name="Jedd G."/>
            <person name="Mewes H.-W."/>
            <person name="Staben C."/>
            <person name="Marcotte E."/>
            <person name="Greenberg D."/>
            <person name="Roy A."/>
            <person name="Foley K."/>
            <person name="Naylor J."/>
            <person name="Stange-Thomann N."/>
            <person name="Barrett R."/>
            <person name="Gnerre S."/>
            <person name="Kamal M."/>
            <person name="Kamvysselis M."/>
            <person name="Mauceli E.W."/>
            <person name="Bielke C."/>
            <person name="Rudd S."/>
            <person name="Frishman D."/>
            <person name="Krystofova S."/>
            <person name="Rasmussen C."/>
            <person name="Metzenberg R.L."/>
            <person name="Perkins D.D."/>
            <person name="Kroken S."/>
            <person name="Cogoni C."/>
            <person name="Macino G."/>
            <person name="Catcheside D.E.A."/>
            <person name="Li W."/>
            <person name="Pratt R.J."/>
            <person name="Osmani S.A."/>
            <person name="DeSouza C.P.C."/>
            <person name="Glass N.L."/>
            <person name="Orbach M.J."/>
            <person name="Berglund J.A."/>
            <person name="Voelker R."/>
            <person name="Yarden O."/>
            <person name="Plamann M."/>
            <person name="Seiler S."/>
            <person name="Dunlap J.C."/>
            <person name="Radford A."/>
            <person name="Aramayo R."/>
            <person name="Natvig D.O."/>
            <person name="Alex L.A."/>
            <person name="Mannhaupt G."/>
            <person name="Ebbole D.J."/>
            <person name="Freitag M."/>
            <person name="Paulsen I."/>
            <person name="Sachs M.S."/>
            <person name="Lander E.S."/>
            <person name="Nusbaum C."/>
            <person name="Birren B.W."/>
        </authorList>
    </citation>
    <scope>NUCLEOTIDE SEQUENCE [LARGE SCALE GENOMIC DNA]</scope>
    <source>
        <strain>ATCC 24698 / 74-OR23-1A / CBS 708.71 / DSM 1257 / FGSC 987</strain>
    </source>
</reference>